<proteinExistence type="evidence at protein level"/>
<reference key="1">
    <citation type="submission" date="1995-09" db="UniProtKB">
        <authorList>
            <person name="Marin I."/>
            <person name="Amaro A.M."/>
            <person name="Jerez C.A."/>
            <person name="Amils R."/>
            <person name="Abad J.P."/>
        </authorList>
    </citation>
    <scope>PROTEIN SEQUENCE</scope>
    <source>
        <strain>DSM 5494</strain>
    </source>
</reference>
<protein>
    <recommendedName>
        <fullName>Heterotroph-specific protein</fullName>
    </recommendedName>
</protein>
<comment type="miscellaneous">
    <text>Found specifically in cells cultured heterotrophically.</text>
</comment>
<name>HHP_THIDL</name>
<keyword id="KW-0903">Direct protein sequencing</keyword>
<accession>P80487</accession>
<organism>
    <name type="scientific">Thiomonas delicata</name>
    <name type="common">Thiomonas cuprina</name>
    <dbReference type="NCBI Taxonomy" id="364030"/>
    <lineage>
        <taxon>Bacteria</taxon>
        <taxon>Pseudomonadati</taxon>
        <taxon>Pseudomonadota</taxon>
        <taxon>Betaproteobacteria</taxon>
        <taxon>Burkholderiales</taxon>
        <taxon>Thiomonas</taxon>
    </lineage>
</organism>
<sequence>AADDVTVVIGSAAPMSGPQ</sequence>
<feature type="chain" id="PRO_0000083969" description="Heterotroph-specific protein">
    <location>
        <begin position="1"/>
        <end position="19" status="greater than"/>
    </location>
</feature>
<feature type="non-terminal residue">
    <location>
        <position position="19"/>
    </location>
</feature>